<keyword id="KW-0002">3D-structure</keyword>
<keyword id="KW-0025">Alternative splicing</keyword>
<keyword id="KW-0106">Calcium</keyword>
<keyword id="KW-0130">Cell adhesion</keyword>
<keyword id="KW-0965">Cell junction</keyword>
<keyword id="KW-1003">Cell membrane</keyword>
<keyword id="KW-0325">Glycoprotein</keyword>
<keyword id="KW-0472">Membrane</keyword>
<keyword id="KW-0597">Phosphoprotein</keyword>
<keyword id="KW-1267">Proteomics identification</keyword>
<keyword id="KW-1185">Reference proteome</keyword>
<keyword id="KW-0677">Repeat</keyword>
<keyword id="KW-0732">Signal</keyword>
<keyword id="KW-0812">Transmembrane</keyword>
<keyword id="KW-1133">Transmembrane helix</keyword>
<protein>
    <recommendedName>
        <fullName>Protocadherin-1</fullName>
    </recommendedName>
    <alternativeName>
        <fullName>Cadherin-like protein 1</fullName>
    </alternativeName>
    <alternativeName>
        <fullName>Protocadherin-42</fullName>
        <shortName>PC42</shortName>
    </alternativeName>
</protein>
<dbReference type="EMBL" id="AC094107">
    <property type="status" value="NOT_ANNOTATED_CDS"/>
    <property type="molecule type" value="Genomic_DNA"/>
</dbReference>
<dbReference type="EMBL" id="CH471062">
    <property type="protein sequence ID" value="EAW61902.1"/>
    <property type="molecule type" value="Genomic_DNA"/>
</dbReference>
<dbReference type="EMBL" id="BC035812">
    <property type="protein sequence ID" value="AAH35812.1"/>
    <property type="molecule type" value="mRNA"/>
</dbReference>
<dbReference type="EMBL" id="L11369">
    <property type="protein sequence ID" value="AAA36418.1"/>
    <property type="molecule type" value="mRNA"/>
</dbReference>
<dbReference type="EMBL" id="L11370">
    <property type="protein sequence ID" value="AAA36419.1"/>
    <property type="status" value="ALT_SEQ"/>
    <property type="molecule type" value="mRNA"/>
</dbReference>
<dbReference type="CCDS" id="CCDS4267.1">
    <molecule id="Q08174-2"/>
</dbReference>
<dbReference type="CCDS" id="CCDS43375.1">
    <molecule id="Q08174-1"/>
</dbReference>
<dbReference type="RefSeq" id="NP_001265542.1">
    <property type="nucleotide sequence ID" value="NM_001278613.1"/>
</dbReference>
<dbReference type="RefSeq" id="NP_001265544.1">
    <property type="nucleotide sequence ID" value="NM_001278615.1"/>
</dbReference>
<dbReference type="RefSeq" id="NP_002578.2">
    <molecule id="Q08174-1"/>
    <property type="nucleotide sequence ID" value="NM_002587.4"/>
</dbReference>
<dbReference type="RefSeq" id="NP_115796.2">
    <molecule id="Q08174-2"/>
    <property type="nucleotide sequence ID" value="NM_032420.3"/>
</dbReference>
<dbReference type="PDB" id="6BX7">
    <property type="method" value="X-ray"/>
    <property type="resolution" value="2.85 A"/>
    <property type="chains" value="A=58-503"/>
</dbReference>
<dbReference type="PDB" id="6MGA">
    <property type="method" value="X-ray"/>
    <property type="resolution" value="3.15 A"/>
    <property type="chains" value="A=58-503"/>
</dbReference>
<dbReference type="PDB" id="6PIM">
    <property type="method" value="X-ray"/>
    <property type="resolution" value="3.05 A"/>
    <property type="chains" value="A=271-503"/>
</dbReference>
<dbReference type="PDB" id="6VFP">
    <property type="method" value="X-ray"/>
    <property type="resolution" value="3.20 A"/>
    <property type="chains" value="A=58-498"/>
</dbReference>
<dbReference type="PDBsum" id="6BX7"/>
<dbReference type="PDBsum" id="6MGA"/>
<dbReference type="PDBsum" id="6PIM"/>
<dbReference type="PDBsum" id="6VFP"/>
<dbReference type="EMDB" id="EMD-21188"/>
<dbReference type="EMDB" id="EMD-21189"/>
<dbReference type="EMDB" id="EMD-21190"/>
<dbReference type="SMR" id="Q08174"/>
<dbReference type="BioGRID" id="111130">
    <property type="interactions" value="113"/>
</dbReference>
<dbReference type="FunCoup" id="Q08174">
    <property type="interactions" value="344"/>
</dbReference>
<dbReference type="IntAct" id="Q08174">
    <property type="interactions" value="71"/>
</dbReference>
<dbReference type="MINT" id="Q08174"/>
<dbReference type="STRING" id="9606.ENSP00000287008"/>
<dbReference type="GlyCosmos" id="Q08174">
    <property type="glycosylation" value="6 sites, No reported glycans"/>
</dbReference>
<dbReference type="GlyGen" id="Q08174">
    <property type="glycosylation" value="7 sites, 9 N-linked glycans (4 sites)"/>
</dbReference>
<dbReference type="iPTMnet" id="Q08174"/>
<dbReference type="PhosphoSitePlus" id="Q08174"/>
<dbReference type="SwissPalm" id="Q08174"/>
<dbReference type="BioMuta" id="PCDH1"/>
<dbReference type="DMDM" id="215273864"/>
<dbReference type="CPTAC" id="CPTAC-1310"/>
<dbReference type="jPOST" id="Q08174"/>
<dbReference type="MassIVE" id="Q08174"/>
<dbReference type="PaxDb" id="9606-ENSP00000287008"/>
<dbReference type="PeptideAtlas" id="Q08174"/>
<dbReference type="ProteomicsDB" id="58575">
    <molecule id="Q08174-1"/>
</dbReference>
<dbReference type="ProteomicsDB" id="58576">
    <molecule id="Q08174-2"/>
</dbReference>
<dbReference type="Antibodypedia" id="27376">
    <property type="antibodies" value="319 antibodies from 28 providers"/>
</dbReference>
<dbReference type="DNASU" id="5097"/>
<dbReference type="Ensembl" id="ENST00000287008.8">
    <molecule id="Q08174-2"/>
    <property type="protein sequence ID" value="ENSP00000287008.3"/>
    <property type="gene ID" value="ENSG00000156453.14"/>
</dbReference>
<dbReference type="Ensembl" id="ENST00000394536.4">
    <molecule id="Q08174-1"/>
    <property type="protein sequence ID" value="ENSP00000378043.3"/>
    <property type="gene ID" value="ENSG00000156453.14"/>
</dbReference>
<dbReference type="GeneID" id="5097"/>
<dbReference type="KEGG" id="hsa:5097"/>
<dbReference type="MANE-Select" id="ENST00000287008.8">
    <molecule id="Q08174-2"/>
    <property type="protein sequence ID" value="ENSP00000287008.3"/>
    <property type="RefSeq nucleotide sequence ID" value="NM_032420.5"/>
    <property type="RefSeq protein sequence ID" value="NP_115796.2"/>
</dbReference>
<dbReference type="UCSC" id="uc003llp.4">
    <molecule id="Q08174-1"/>
    <property type="organism name" value="human"/>
</dbReference>
<dbReference type="AGR" id="HGNC:8655"/>
<dbReference type="CTD" id="5097"/>
<dbReference type="DisGeNET" id="5097"/>
<dbReference type="GeneCards" id="PCDH1"/>
<dbReference type="HGNC" id="HGNC:8655">
    <property type="gene designation" value="PCDH1"/>
</dbReference>
<dbReference type="HPA" id="ENSG00000156453">
    <property type="expression patterns" value="Low tissue specificity"/>
</dbReference>
<dbReference type="MIM" id="603626">
    <property type="type" value="gene"/>
</dbReference>
<dbReference type="neXtProt" id="NX_Q08174"/>
<dbReference type="OpenTargets" id="ENSG00000156453"/>
<dbReference type="PharmGKB" id="PA32994"/>
<dbReference type="VEuPathDB" id="HostDB:ENSG00000156453"/>
<dbReference type="eggNOG" id="ENOG502QWB7">
    <property type="taxonomic scope" value="Eukaryota"/>
</dbReference>
<dbReference type="GeneTree" id="ENSGT00940000155521"/>
<dbReference type="HOGENOM" id="CLU_006480_5_3_1"/>
<dbReference type="InParanoid" id="Q08174"/>
<dbReference type="OMA" id="HRGAIWT"/>
<dbReference type="OrthoDB" id="6252479at2759"/>
<dbReference type="PAN-GO" id="Q08174">
    <property type="GO annotations" value="2 GO annotations based on evolutionary models"/>
</dbReference>
<dbReference type="PhylomeDB" id="Q08174"/>
<dbReference type="TreeFam" id="TF320624"/>
<dbReference type="PathwayCommons" id="Q08174"/>
<dbReference type="SignaLink" id="Q08174"/>
<dbReference type="BioGRID-ORCS" id="5097">
    <property type="hits" value="69 hits in 1159 CRISPR screens"/>
</dbReference>
<dbReference type="CD-CODE" id="FB4E32DD">
    <property type="entry name" value="Presynaptic clusters and postsynaptic densities"/>
</dbReference>
<dbReference type="ChiTaRS" id="PCDH1">
    <property type="organism name" value="human"/>
</dbReference>
<dbReference type="GeneWiki" id="PCDH1"/>
<dbReference type="GenomeRNAi" id="5097"/>
<dbReference type="Pharos" id="Q08174">
    <property type="development level" value="Tbio"/>
</dbReference>
<dbReference type="PRO" id="PR:Q08174"/>
<dbReference type="Proteomes" id="UP000005640">
    <property type="component" value="Chromosome 5"/>
</dbReference>
<dbReference type="RNAct" id="Q08174">
    <property type="molecule type" value="protein"/>
</dbReference>
<dbReference type="Bgee" id="ENSG00000156453">
    <property type="expression patterns" value="Expressed in lower esophagus mucosa and 178 other cell types or tissues"/>
</dbReference>
<dbReference type="ExpressionAtlas" id="Q08174">
    <property type="expression patterns" value="baseline and differential"/>
</dbReference>
<dbReference type="GO" id="GO:0030054">
    <property type="term" value="C:cell junction"/>
    <property type="evidence" value="ECO:0000314"/>
    <property type="project" value="HPA"/>
</dbReference>
<dbReference type="GO" id="GO:0005911">
    <property type="term" value="C:cell-cell junction"/>
    <property type="evidence" value="ECO:0000304"/>
    <property type="project" value="ProtInc"/>
</dbReference>
<dbReference type="GO" id="GO:0043231">
    <property type="term" value="C:intracellular membrane-bounded organelle"/>
    <property type="evidence" value="ECO:0000314"/>
    <property type="project" value="HPA"/>
</dbReference>
<dbReference type="GO" id="GO:0005730">
    <property type="term" value="C:nucleolus"/>
    <property type="evidence" value="ECO:0000314"/>
    <property type="project" value="HPA"/>
</dbReference>
<dbReference type="GO" id="GO:0005654">
    <property type="term" value="C:nucleoplasm"/>
    <property type="evidence" value="ECO:0000314"/>
    <property type="project" value="HPA"/>
</dbReference>
<dbReference type="GO" id="GO:0005886">
    <property type="term" value="C:plasma membrane"/>
    <property type="evidence" value="ECO:0000318"/>
    <property type="project" value="GO_Central"/>
</dbReference>
<dbReference type="GO" id="GO:0005509">
    <property type="term" value="F:calcium ion binding"/>
    <property type="evidence" value="ECO:0007669"/>
    <property type="project" value="InterPro"/>
</dbReference>
<dbReference type="GO" id="GO:0007155">
    <property type="term" value="P:cell adhesion"/>
    <property type="evidence" value="ECO:0000318"/>
    <property type="project" value="GO_Central"/>
</dbReference>
<dbReference type="GO" id="GO:0007267">
    <property type="term" value="P:cell-cell signaling"/>
    <property type="evidence" value="ECO:0000304"/>
    <property type="project" value="ProtInc"/>
</dbReference>
<dbReference type="GO" id="GO:0007156">
    <property type="term" value="P:homophilic cell adhesion via plasma membrane adhesion molecules"/>
    <property type="evidence" value="ECO:0007669"/>
    <property type="project" value="InterPro"/>
</dbReference>
<dbReference type="GO" id="GO:0007399">
    <property type="term" value="P:nervous system development"/>
    <property type="evidence" value="ECO:0000304"/>
    <property type="project" value="ProtInc"/>
</dbReference>
<dbReference type="CDD" id="cd11304">
    <property type="entry name" value="Cadherin_repeat"/>
    <property type="match status" value="7"/>
</dbReference>
<dbReference type="FunFam" id="2.60.40.60:FF:000028">
    <property type="entry name" value="Protocadherin 1"/>
    <property type="match status" value="1"/>
</dbReference>
<dbReference type="FunFam" id="2.60.40.60:FF:000034">
    <property type="entry name" value="Protocadherin 1"/>
    <property type="match status" value="1"/>
</dbReference>
<dbReference type="FunFam" id="2.60.40.60:FF:000043">
    <property type="entry name" value="Protocadherin 1"/>
    <property type="match status" value="1"/>
</dbReference>
<dbReference type="FunFam" id="2.60.40.60:FF:000072">
    <property type="entry name" value="Protocadherin 1"/>
    <property type="match status" value="1"/>
</dbReference>
<dbReference type="FunFam" id="2.60.40.60:FF:000078">
    <property type="entry name" value="Protocadherin 1"/>
    <property type="match status" value="1"/>
</dbReference>
<dbReference type="FunFam" id="2.60.40.60:FF:000005">
    <property type="entry name" value="Protocadherin 9"/>
    <property type="match status" value="1"/>
</dbReference>
<dbReference type="FunFam" id="2.60.40.60:FF:000016">
    <property type="entry name" value="Protocadherin 9"/>
    <property type="match status" value="1"/>
</dbReference>
<dbReference type="Gene3D" id="2.60.40.60">
    <property type="entry name" value="Cadherins"/>
    <property type="match status" value="7"/>
</dbReference>
<dbReference type="InterPro" id="IPR002126">
    <property type="entry name" value="Cadherin-like_dom"/>
</dbReference>
<dbReference type="InterPro" id="IPR015919">
    <property type="entry name" value="Cadherin-like_sf"/>
</dbReference>
<dbReference type="InterPro" id="IPR020894">
    <property type="entry name" value="Cadherin_CS"/>
</dbReference>
<dbReference type="InterPro" id="IPR013164">
    <property type="entry name" value="Cadherin_N"/>
</dbReference>
<dbReference type="InterPro" id="IPR013585">
    <property type="entry name" value="Protocadherin"/>
</dbReference>
<dbReference type="InterPro" id="IPR050174">
    <property type="entry name" value="Protocadherin/Cadherin-CA"/>
</dbReference>
<dbReference type="PANTHER" id="PTHR24028">
    <property type="entry name" value="CADHERIN-87A"/>
    <property type="match status" value="1"/>
</dbReference>
<dbReference type="PANTHER" id="PTHR24028:SF247">
    <property type="entry name" value="PROTOCADHERIN-1"/>
    <property type="match status" value="1"/>
</dbReference>
<dbReference type="Pfam" id="PF00028">
    <property type="entry name" value="Cadherin"/>
    <property type="match status" value="6"/>
</dbReference>
<dbReference type="Pfam" id="PF08266">
    <property type="entry name" value="Cadherin_2"/>
    <property type="match status" value="1"/>
</dbReference>
<dbReference type="Pfam" id="PF08374">
    <property type="entry name" value="Protocadherin"/>
    <property type="match status" value="1"/>
</dbReference>
<dbReference type="PRINTS" id="PR00205">
    <property type="entry name" value="CADHERIN"/>
</dbReference>
<dbReference type="SMART" id="SM00112">
    <property type="entry name" value="CA"/>
    <property type="match status" value="6"/>
</dbReference>
<dbReference type="SUPFAM" id="SSF49313">
    <property type="entry name" value="Cadherin-like"/>
    <property type="match status" value="6"/>
</dbReference>
<dbReference type="PROSITE" id="PS00232">
    <property type="entry name" value="CADHERIN_1"/>
    <property type="match status" value="6"/>
</dbReference>
<dbReference type="PROSITE" id="PS50268">
    <property type="entry name" value="CADHERIN_2"/>
    <property type="match status" value="7"/>
</dbReference>
<reference key="1">
    <citation type="journal article" date="2004" name="Nature">
        <title>The DNA sequence and comparative analysis of human chromosome 5.</title>
        <authorList>
            <person name="Schmutz J."/>
            <person name="Martin J."/>
            <person name="Terry A."/>
            <person name="Couronne O."/>
            <person name="Grimwood J."/>
            <person name="Lowry S."/>
            <person name="Gordon L.A."/>
            <person name="Scott D."/>
            <person name="Xie G."/>
            <person name="Huang W."/>
            <person name="Hellsten U."/>
            <person name="Tran-Gyamfi M."/>
            <person name="She X."/>
            <person name="Prabhakar S."/>
            <person name="Aerts A."/>
            <person name="Altherr M."/>
            <person name="Bajorek E."/>
            <person name="Black S."/>
            <person name="Branscomb E."/>
            <person name="Caoile C."/>
            <person name="Challacombe J.F."/>
            <person name="Chan Y.M."/>
            <person name="Denys M."/>
            <person name="Detter J.C."/>
            <person name="Escobar J."/>
            <person name="Flowers D."/>
            <person name="Fotopulos D."/>
            <person name="Glavina T."/>
            <person name="Gomez M."/>
            <person name="Gonzales E."/>
            <person name="Goodstein D."/>
            <person name="Grigoriev I."/>
            <person name="Groza M."/>
            <person name="Hammon N."/>
            <person name="Hawkins T."/>
            <person name="Haydu L."/>
            <person name="Israni S."/>
            <person name="Jett J."/>
            <person name="Kadner K."/>
            <person name="Kimball H."/>
            <person name="Kobayashi A."/>
            <person name="Lopez F."/>
            <person name="Lou Y."/>
            <person name="Martinez D."/>
            <person name="Medina C."/>
            <person name="Morgan J."/>
            <person name="Nandkeshwar R."/>
            <person name="Noonan J.P."/>
            <person name="Pitluck S."/>
            <person name="Pollard M."/>
            <person name="Predki P."/>
            <person name="Priest J."/>
            <person name="Ramirez L."/>
            <person name="Retterer J."/>
            <person name="Rodriguez A."/>
            <person name="Rogers S."/>
            <person name="Salamov A."/>
            <person name="Salazar A."/>
            <person name="Thayer N."/>
            <person name="Tice H."/>
            <person name="Tsai M."/>
            <person name="Ustaszewska A."/>
            <person name="Vo N."/>
            <person name="Wheeler J."/>
            <person name="Wu K."/>
            <person name="Yang J."/>
            <person name="Dickson M."/>
            <person name="Cheng J.-F."/>
            <person name="Eichler E.E."/>
            <person name="Olsen A."/>
            <person name="Pennacchio L.A."/>
            <person name="Rokhsar D.S."/>
            <person name="Richardson P."/>
            <person name="Lucas S.M."/>
            <person name="Myers R.M."/>
            <person name="Rubin E.M."/>
        </authorList>
    </citation>
    <scope>NUCLEOTIDE SEQUENCE [LARGE SCALE GENOMIC DNA]</scope>
</reference>
<reference key="2">
    <citation type="submission" date="2005-09" db="EMBL/GenBank/DDBJ databases">
        <authorList>
            <person name="Mural R.J."/>
            <person name="Istrail S."/>
            <person name="Sutton G.G."/>
            <person name="Florea L."/>
            <person name="Halpern A.L."/>
            <person name="Mobarry C.M."/>
            <person name="Lippert R."/>
            <person name="Walenz B."/>
            <person name="Shatkay H."/>
            <person name="Dew I."/>
            <person name="Miller J.R."/>
            <person name="Flanigan M.J."/>
            <person name="Edwards N.J."/>
            <person name="Bolanos R."/>
            <person name="Fasulo D."/>
            <person name="Halldorsson B.V."/>
            <person name="Hannenhalli S."/>
            <person name="Turner R."/>
            <person name="Yooseph S."/>
            <person name="Lu F."/>
            <person name="Nusskern D.R."/>
            <person name="Shue B.C."/>
            <person name="Zheng X.H."/>
            <person name="Zhong F."/>
            <person name="Delcher A.L."/>
            <person name="Huson D.H."/>
            <person name="Kravitz S.A."/>
            <person name="Mouchard L."/>
            <person name="Reinert K."/>
            <person name="Remington K.A."/>
            <person name="Clark A.G."/>
            <person name="Waterman M.S."/>
            <person name="Eichler E.E."/>
            <person name="Adams M.D."/>
            <person name="Hunkapiller M.W."/>
            <person name="Myers E.W."/>
            <person name="Venter J.C."/>
        </authorList>
    </citation>
    <scope>NUCLEOTIDE SEQUENCE [LARGE SCALE GENOMIC DNA]</scope>
</reference>
<reference key="3">
    <citation type="journal article" date="2004" name="Genome Res.">
        <title>The status, quality, and expansion of the NIH full-length cDNA project: the Mammalian Gene Collection (MGC).</title>
        <authorList>
            <consortium name="The MGC Project Team"/>
        </authorList>
    </citation>
    <scope>NUCLEOTIDE SEQUENCE [LARGE SCALE MRNA] (ISOFORM 1)</scope>
    <source>
        <tissue>Brain</tissue>
    </source>
</reference>
<reference key="4">
    <citation type="journal article" date="1993" name="EMBO J.">
        <title>Protocadherins: a large family of cadherin-related molecules in central nervous system.</title>
        <authorList>
            <person name="Sano K."/>
            <person name="Tanihara H."/>
            <person name="Heimark R.L."/>
            <person name="Obata S."/>
            <person name="Davidson M."/>
            <person name="St John T."/>
            <person name="Taketani S."/>
            <person name="Suzuki S."/>
        </authorList>
    </citation>
    <scope>NUCLEOTIDE SEQUENCE [MRNA] OF 10-1060 (ISOFORM 1)</scope>
    <scope>NUCLEOTIDE SEQUENCE [MRNA] OF 980-1060 (ISOFORM 2)</scope>
    <scope>VARIANT PRO-25</scope>
    <source>
        <tissue>Brain</tissue>
    </source>
</reference>
<reference key="5">
    <citation type="journal article" date="2008" name="Proc. Natl. Acad. Sci. U.S.A.">
        <title>A quantitative atlas of mitotic phosphorylation.</title>
        <authorList>
            <person name="Dephoure N."/>
            <person name="Zhou C."/>
            <person name="Villen J."/>
            <person name="Beausoleil S.A."/>
            <person name="Bakalarski C.E."/>
            <person name="Elledge S.J."/>
            <person name="Gygi S.P."/>
        </authorList>
    </citation>
    <scope>PHOSPHORYLATION [LARGE SCALE ANALYSIS] AT SER-949 AND SER-962</scope>
    <scope>IDENTIFICATION BY MASS SPECTROMETRY [LARGE SCALE ANALYSIS]</scope>
    <source>
        <tissue>Cervix carcinoma</tissue>
    </source>
</reference>
<reference key="6">
    <citation type="journal article" date="2009" name="J. Proteome Res.">
        <title>Glycoproteomics analysis of human liver tissue by combination of multiple enzyme digestion and hydrazide chemistry.</title>
        <authorList>
            <person name="Chen R."/>
            <person name="Jiang X."/>
            <person name="Sun D."/>
            <person name="Han G."/>
            <person name="Wang F."/>
            <person name="Ye M."/>
            <person name="Wang L."/>
            <person name="Zou H."/>
        </authorList>
    </citation>
    <scope>GLYCOSYLATION [LARGE SCALE ANALYSIS] AT ASN-305; ASN-813 AND ASN-818</scope>
    <source>
        <tissue>Liver</tissue>
    </source>
</reference>
<reference key="7">
    <citation type="journal article" date="2011" name="BMC Syst. Biol.">
        <title>Initial characterization of the human central proteome.</title>
        <authorList>
            <person name="Burkard T.R."/>
            <person name="Planyavsky M."/>
            <person name="Kaupe I."/>
            <person name="Breitwieser F.P."/>
            <person name="Buerckstuemmer T."/>
            <person name="Bennett K.L."/>
            <person name="Superti-Furga G."/>
            <person name="Colinge J."/>
        </authorList>
    </citation>
    <scope>IDENTIFICATION BY MASS SPECTROMETRY [LARGE SCALE ANALYSIS]</scope>
</reference>
<reference key="8">
    <citation type="journal article" date="2011" name="Sci. Signal.">
        <title>System-wide temporal characterization of the proteome and phosphoproteome of human embryonic stem cell differentiation.</title>
        <authorList>
            <person name="Rigbolt K.T."/>
            <person name="Prokhorova T.A."/>
            <person name="Akimov V."/>
            <person name="Henningsen J."/>
            <person name="Johansen P.T."/>
            <person name="Kratchmarova I."/>
            <person name="Kassem M."/>
            <person name="Mann M."/>
            <person name="Olsen J.V."/>
            <person name="Blagoev B."/>
        </authorList>
    </citation>
    <scope>PHOSPHORYLATION [LARGE SCALE ANALYSIS] AT SER-918; SER-962 AND SER-984</scope>
    <scope>IDENTIFICATION BY MASS SPECTROMETRY [LARGE SCALE ANALYSIS]</scope>
</reference>
<reference key="9">
    <citation type="journal article" date="2014" name="J. Proteomics">
        <title>An enzyme assisted RP-RPLC approach for in-depth analysis of human liver phosphoproteome.</title>
        <authorList>
            <person name="Bian Y."/>
            <person name="Song C."/>
            <person name="Cheng K."/>
            <person name="Dong M."/>
            <person name="Wang F."/>
            <person name="Huang J."/>
            <person name="Sun D."/>
            <person name="Wang L."/>
            <person name="Ye M."/>
            <person name="Zou H."/>
        </authorList>
    </citation>
    <scope>PHOSPHORYLATION [LARGE SCALE ANALYSIS] AT SER-1173 (ISOFORM 2)</scope>
    <scope>IDENTIFICATION BY MASS SPECTROMETRY [LARGE SCALE ANALYSIS]</scope>
    <source>
        <tissue>Liver</tissue>
    </source>
</reference>
<gene>
    <name type="primary">PCDH1</name>
</gene>
<name>PCDH1_HUMAN</name>
<comment type="function">
    <text>May be involved in cell-cell interaction processes and in cell adhesion.</text>
</comment>
<comment type="subcellular location">
    <subcellularLocation>
        <location>Cell junction</location>
    </subcellularLocation>
    <subcellularLocation>
        <location evidence="7">Cell membrane</location>
        <topology evidence="7">Single-pass type I membrane protein</topology>
    </subcellularLocation>
    <text>Found at cell-cell boundaries and probably at cell-matrix boundaries.</text>
</comment>
<comment type="alternative products">
    <event type="alternative splicing"/>
    <isoform>
        <id>Q08174-1</id>
        <name>1</name>
        <sequence type="displayed"/>
    </isoform>
    <isoform>
        <id>Q08174-2</id>
        <name>2</name>
        <name>PC42-8</name>
        <sequence type="described" ref="VSP_000703"/>
    </isoform>
</comment>
<comment type="tissue specificity">
    <text>Highly expressed in the brain and neuro-glial cells.</text>
</comment>
<comment type="developmental stage">
    <text>Highest expression in adults.</text>
</comment>
<comment type="caution">
    <text evidence="7">It is uncertain whether Met-1 or Met-23 is the initiator.</text>
</comment>
<comment type="sequence caution" evidence="7">
    <conflict type="miscellaneous discrepancy">
        <sequence resource="EMBL-CDS" id="AAA36419"/>
    </conflict>
    <text>Probable cloning artifact.</text>
</comment>
<feature type="signal peptide" evidence="1">
    <location>
        <begin position="1"/>
        <end position="57"/>
    </location>
</feature>
<feature type="chain" id="PRO_0000354078" description="Protocadherin-1">
    <location>
        <begin position="58"/>
        <end position="1060"/>
    </location>
</feature>
<feature type="topological domain" description="Extracellular" evidence="1">
    <location>
        <begin position="58"/>
        <end position="852"/>
    </location>
</feature>
<feature type="transmembrane region" description="Helical" evidence="1">
    <location>
        <begin position="853"/>
        <end position="873"/>
    </location>
</feature>
<feature type="topological domain" description="Cytoplasmic" evidence="1">
    <location>
        <begin position="874"/>
        <end position="1060"/>
    </location>
</feature>
<feature type="domain" description="Cadherin 1" evidence="2">
    <location>
        <begin position="58"/>
        <end position="168"/>
    </location>
</feature>
<feature type="domain" description="Cadherin 2" evidence="2">
    <location>
        <begin position="169"/>
        <end position="280"/>
    </location>
</feature>
<feature type="domain" description="Cadherin 3" evidence="2">
    <location>
        <begin position="281"/>
        <end position="387"/>
    </location>
</feature>
<feature type="domain" description="Cadherin 4" evidence="2">
    <location>
        <begin position="396"/>
        <end position="506"/>
    </location>
</feature>
<feature type="domain" description="Cadherin 5" evidence="2">
    <location>
        <begin position="507"/>
        <end position="612"/>
    </location>
</feature>
<feature type="domain" description="Cadherin 6" evidence="2">
    <location>
        <begin position="613"/>
        <end position="715"/>
    </location>
</feature>
<feature type="domain" description="Cadherin 7" evidence="2">
    <location>
        <begin position="718"/>
        <end position="844"/>
    </location>
</feature>
<feature type="region of interest" description="Disordered" evidence="3">
    <location>
        <begin position="884"/>
        <end position="1045"/>
    </location>
</feature>
<feature type="compositionally biased region" description="Basic and acidic residues" evidence="3">
    <location>
        <begin position="884"/>
        <end position="897"/>
    </location>
</feature>
<feature type="compositionally biased region" description="Basic residues" evidence="3">
    <location>
        <begin position="907"/>
        <end position="920"/>
    </location>
</feature>
<feature type="compositionally biased region" description="Low complexity" evidence="3">
    <location>
        <begin position="973"/>
        <end position="986"/>
    </location>
</feature>
<feature type="compositionally biased region" description="Polar residues" evidence="3">
    <location>
        <begin position="1003"/>
        <end position="1024"/>
    </location>
</feature>
<feature type="compositionally biased region" description="Polar residues" evidence="3">
    <location>
        <begin position="1033"/>
        <end position="1043"/>
    </location>
</feature>
<feature type="modified residue" description="Phosphoserine" evidence="9">
    <location>
        <position position="918"/>
    </location>
</feature>
<feature type="modified residue" description="Phosphoserine" evidence="8">
    <location>
        <position position="949"/>
    </location>
</feature>
<feature type="modified residue" description="Phosphoserine" evidence="8 9">
    <location>
        <position position="962"/>
    </location>
</feature>
<feature type="modified residue" description="Phosphoserine" evidence="9">
    <location>
        <position position="984"/>
    </location>
</feature>
<feature type="glycosylation site" description="N-linked (GlcNAc...) asparagine" evidence="4">
    <location>
        <position position="305"/>
    </location>
</feature>
<feature type="glycosylation site" description="N-linked (GlcNAc...) asparagine" evidence="1">
    <location>
        <position position="403"/>
    </location>
</feature>
<feature type="glycosylation site" description="N-linked (GlcNAc...) asparagine" evidence="1">
    <location>
        <position position="618"/>
    </location>
</feature>
<feature type="glycosylation site" description="N-linked (GlcNAc...) asparagine" evidence="1">
    <location>
        <position position="662"/>
    </location>
</feature>
<feature type="glycosylation site" description="N-linked (GlcNAc...) asparagine" evidence="4">
    <location>
        <position position="813"/>
    </location>
</feature>
<feature type="glycosylation site" description="N-linked (GlcNAc...) asparagine" evidence="4">
    <location>
        <position position="818"/>
    </location>
</feature>
<feature type="splice variant" id="VSP_000703" description="In isoform 2." evidence="6">
    <original>VGQPFQLSTPQPLPHPYHGAIWTEVWE</original>
    <variation>LPHRRVTFSATSQAQELQDPSQHSYYDSGLEESETPSSKSSSGPRLGPLALPEDHYERTTPDGSIGEMEHPENDLRPLPDVAMTGTCTRECSEFGHSDTCWMPGQSSPSRRTKSSALKLSTFVPYQDRGGQEPAGAGSPSPPEDRNTKTAPVRLLPSYSAFSHSSHDSCKDSATLEEIPLTQTSDFPPAATPASAQTAKREIYL</variation>
    <location>
        <begin position="1034"/>
        <end position="1060"/>
    </location>
</feature>
<feature type="sequence variant" id="VAR_047530" description="In dbSNP:rs12517385.">
    <original>L</original>
    <variation>F</variation>
    <location>
        <position position="15"/>
    </location>
</feature>
<feature type="sequence variant" id="VAR_047531" description="In dbSNP:rs12515587." evidence="5">
    <original>H</original>
    <variation>P</variation>
    <location>
        <position position="25"/>
    </location>
</feature>
<feature type="sequence variant" id="VAR_047532" description="In dbSNP:rs3822357.">
    <original>A</original>
    <variation>T</variation>
    <location>
        <position position="514"/>
    </location>
</feature>
<feature type="sequence conflict" description="In Ref. 4; AAA36419." evidence="7" ref="4">
    <original>G</original>
    <variation>A</variation>
    <location>
        <position position="147"/>
    </location>
</feature>
<feature type="sequence conflict" description="In Ref. 4; AAA36419." evidence="7" ref="4">
    <original>S</original>
    <variation>T</variation>
    <location>
        <position position="262"/>
    </location>
</feature>
<feature type="strand" evidence="11">
    <location>
        <begin position="63"/>
        <end position="67"/>
    </location>
</feature>
<feature type="strand" evidence="11">
    <location>
        <begin position="73"/>
        <end position="75"/>
    </location>
</feature>
<feature type="helix" evidence="13">
    <location>
        <begin position="77"/>
        <end position="79"/>
    </location>
</feature>
<feature type="strand" evidence="11">
    <location>
        <begin position="90"/>
        <end position="94"/>
    </location>
</feature>
<feature type="turn" evidence="11">
    <location>
        <begin position="96"/>
        <end position="98"/>
    </location>
</feature>
<feature type="strand" evidence="11">
    <location>
        <begin position="99"/>
        <end position="102"/>
    </location>
</feature>
<feature type="turn" evidence="11">
    <location>
        <begin position="103"/>
        <end position="106"/>
    </location>
</feature>
<feature type="strand" evidence="11">
    <location>
        <begin position="107"/>
        <end position="110"/>
    </location>
</feature>
<feature type="turn" evidence="11">
    <location>
        <begin position="117"/>
        <end position="119"/>
    </location>
</feature>
<feature type="helix" evidence="11">
    <location>
        <begin position="121"/>
        <end position="123"/>
    </location>
</feature>
<feature type="strand" evidence="13">
    <location>
        <begin position="128"/>
        <end position="130"/>
    </location>
</feature>
<feature type="strand" evidence="11">
    <location>
        <begin position="132"/>
        <end position="140"/>
    </location>
</feature>
<feature type="strand" evidence="11">
    <location>
        <begin position="143"/>
        <end position="145"/>
    </location>
</feature>
<feature type="strand" evidence="11">
    <location>
        <begin position="150"/>
        <end position="159"/>
    </location>
</feature>
<feature type="strand" evidence="11">
    <location>
        <begin position="169"/>
        <end position="178"/>
    </location>
</feature>
<feature type="strand" evidence="11">
    <location>
        <begin position="186"/>
        <end position="188"/>
    </location>
</feature>
<feature type="helix" evidence="11">
    <location>
        <begin position="198"/>
        <end position="200"/>
    </location>
</feature>
<feature type="strand" evidence="11">
    <location>
        <begin position="201"/>
        <end position="208"/>
    </location>
</feature>
<feature type="helix" evidence="11">
    <location>
        <begin position="211"/>
        <end position="214"/>
    </location>
</feature>
<feature type="strand" evidence="11">
    <location>
        <begin position="217"/>
        <end position="222"/>
    </location>
</feature>
<feature type="strand" evidence="11">
    <location>
        <begin position="229"/>
        <end position="234"/>
    </location>
</feature>
<feature type="turn" evidence="11">
    <location>
        <begin position="240"/>
        <end position="242"/>
    </location>
</feature>
<feature type="strand" evidence="11">
    <location>
        <begin position="245"/>
        <end position="258"/>
    </location>
</feature>
<feature type="strand" evidence="11">
    <location>
        <begin position="261"/>
        <end position="271"/>
    </location>
</feature>
<feature type="strand" evidence="11">
    <location>
        <begin position="279"/>
        <end position="290"/>
    </location>
</feature>
<feature type="strand" evidence="11">
    <location>
        <begin position="298"/>
        <end position="301"/>
    </location>
</feature>
<feature type="helix" evidence="11">
    <location>
        <begin position="310"/>
        <end position="312"/>
    </location>
</feature>
<feature type="strand" evidence="11">
    <location>
        <begin position="315"/>
        <end position="321"/>
    </location>
</feature>
<feature type="helix" evidence="11">
    <location>
        <begin position="324"/>
        <end position="329"/>
    </location>
</feature>
<feature type="strand" evidence="11">
    <location>
        <begin position="330"/>
        <end position="332"/>
    </location>
</feature>
<feature type="turn" evidence="11">
    <location>
        <begin position="334"/>
        <end position="336"/>
    </location>
</feature>
<feature type="strand" evidence="11">
    <location>
        <begin position="338"/>
        <end position="341"/>
    </location>
</feature>
<feature type="turn" evidence="11">
    <location>
        <begin position="347"/>
        <end position="349"/>
    </location>
</feature>
<feature type="strand" evidence="11">
    <location>
        <begin position="351"/>
        <end position="361"/>
    </location>
</feature>
<feature type="strand" evidence="11">
    <location>
        <begin position="363"/>
        <end position="365"/>
    </location>
</feature>
<feature type="strand" evidence="11">
    <location>
        <begin position="368"/>
        <end position="378"/>
    </location>
</feature>
<feature type="strand" evidence="11">
    <location>
        <begin position="386"/>
        <end position="390"/>
    </location>
</feature>
<feature type="strand" evidence="11">
    <location>
        <begin position="401"/>
        <end position="403"/>
    </location>
</feature>
<feature type="strand" evidence="11">
    <location>
        <begin position="413"/>
        <end position="420"/>
    </location>
</feature>
<feature type="helix" evidence="11">
    <location>
        <begin position="425"/>
        <end position="428"/>
    </location>
</feature>
<feature type="strand" evidence="11">
    <location>
        <begin position="431"/>
        <end position="434"/>
    </location>
</feature>
<feature type="strand" evidence="11">
    <location>
        <begin position="439"/>
        <end position="444"/>
    </location>
</feature>
<feature type="strand" evidence="12">
    <location>
        <begin position="446"/>
        <end position="448"/>
    </location>
</feature>
<feature type="strand" evidence="11">
    <location>
        <begin position="453"/>
        <end position="462"/>
    </location>
</feature>
<feature type="turn" evidence="13">
    <location>
        <begin position="466"/>
        <end position="468"/>
    </location>
</feature>
<feature type="strand" evidence="11">
    <location>
        <begin position="472"/>
        <end position="479"/>
    </location>
</feature>
<feature type="strand" evidence="11">
    <location>
        <begin position="487"/>
        <end position="495"/>
    </location>
</feature>
<feature type="modified residue" description="Phosphoserine" evidence="10">
    <location sequence="Q08174-2">
        <position position="1173"/>
    </location>
</feature>
<feature type="sequence conflict" description="In Ref. 4; AAA36418." evidence="7" ref="4">
    <original>V</original>
    <variation>M</variation>
    <location sequence="Q08174-2">
        <position position="1156"/>
    </location>
</feature>
<evidence type="ECO:0000255" key="1"/>
<evidence type="ECO:0000255" key="2">
    <source>
        <dbReference type="PROSITE-ProRule" id="PRU00043"/>
    </source>
</evidence>
<evidence type="ECO:0000256" key="3">
    <source>
        <dbReference type="SAM" id="MobiDB-lite"/>
    </source>
</evidence>
<evidence type="ECO:0000269" key="4">
    <source>
    </source>
</evidence>
<evidence type="ECO:0000269" key="5">
    <source>
    </source>
</evidence>
<evidence type="ECO:0000303" key="6">
    <source>
    </source>
</evidence>
<evidence type="ECO:0000305" key="7"/>
<evidence type="ECO:0007744" key="8">
    <source>
    </source>
</evidence>
<evidence type="ECO:0007744" key="9">
    <source>
    </source>
</evidence>
<evidence type="ECO:0007744" key="10">
    <source>
    </source>
</evidence>
<evidence type="ECO:0007829" key="11">
    <source>
        <dbReference type="PDB" id="6BX7"/>
    </source>
</evidence>
<evidence type="ECO:0007829" key="12">
    <source>
        <dbReference type="PDB" id="6MGA"/>
    </source>
</evidence>
<evidence type="ECO:0007829" key="13">
    <source>
        <dbReference type="PDB" id="6VFP"/>
    </source>
</evidence>
<sequence length="1060" mass="114743">MDSGAGGRRCPEAALLILGPPRMEHLRHSPGPGGQRLLLPSMLLALLLLLAPSPGHATRVVYKVPEEQPPNTLIGSLAADYGFPDVGHLYKLEVGAPYLRVDGKTGDIFTTETSIDREGLRECQNQLPGDPCILEFEVSITDLVQNGSPRLLEGQIEVQDINDNTPNFASPVITLAIPENTNIGSLFPIPLASDRDAGPNGVASYELQAGPEAQELFGLQVAEDQEEKQPQLIVMGNLDRERWDSYDLTIKVQDGGSPPRASSALLRVTVLDTNDNAPKFERPSYEAELSENSPIGHSVIQVKANDSDQGANAEIEYTFHQAPEVVRRLLRLDRNTGLITVQGPVDREDLSTLRFSVLAKDRGTNPKSARAQVVVTVKDMNDNAPTIEIRGIGLVTHQDGMANISEDVAEETAVALVQVSDRDEGENAAVTCVVAGDVPFQLRQASETGSDSKKKYFLQTTTPLDYEKVKDYTIEIVAVDSGNPPLSSTNSLKVQVVDVNDNAPVFTQSVTEVAFPENNKPGEVIAEITASDADSGSNAELVYSLEPEPAAKGLFTISPETGEIQVKTSLDREQRESYELKVVAADRGSPSLQGTATVLVNVLDCNDNDPKFMLSGYNFSVMENMPALSPVGMVTVIDGDKGENAQVQLSVEQDNGDFVIQNGTGTILSSLSFDREQQSTYTFQLKAVDGGVPPRSAYVGVTINVLDENDNAPYITAPSNTSHKLLTPQTRLGETVSQVAAEDFDSGVNAELIYSIAGGNPYGLFQIGSHSGAITLEKEIERRHHGLHRLVVKVSDRGKPPRYGTALVHLYVNETLANRTLLETLLGHSLDTPLDIDIAGDPEYERSKQRGNILFGVVAGVVAVALLIALAVLVRYCRQREAKSGYQAGKKETKDLYAPKPSGKASKGNKSKGKKSKSPKPVKPVEDEDEAGLQKSLKFNLMSDAPGDSPRIHLPLNYPPGSPDLGRHYRSNSPLPSIQLQPQSPSASKKHQVVQDLPPANTFVGTGDTTSTGSEQYSDYSYRTNPPKYPSKQVGQPFQLSTPQPLPHPYHGAIWTEVWE</sequence>
<proteinExistence type="evidence at protein level"/>
<organism>
    <name type="scientific">Homo sapiens</name>
    <name type="common">Human</name>
    <dbReference type="NCBI Taxonomy" id="9606"/>
    <lineage>
        <taxon>Eukaryota</taxon>
        <taxon>Metazoa</taxon>
        <taxon>Chordata</taxon>
        <taxon>Craniata</taxon>
        <taxon>Vertebrata</taxon>
        <taxon>Euteleostomi</taxon>
        <taxon>Mammalia</taxon>
        <taxon>Eutheria</taxon>
        <taxon>Euarchontoglires</taxon>
        <taxon>Primates</taxon>
        <taxon>Haplorrhini</taxon>
        <taxon>Catarrhini</taxon>
        <taxon>Hominidae</taxon>
        <taxon>Homo</taxon>
    </lineage>
</organism>
<accession>Q08174</accession>
<accession>Q8IUP2</accession>